<name>4CLL5_ORYSJ</name>
<protein>
    <recommendedName>
        <fullName>4-coumarate--CoA ligase-like 5</fullName>
        <ecNumber evidence="1">6.2.1.12</ecNumber>
    </recommendedName>
</protein>
<proteinExistence type="evidence at transcript level"/>
<keyword id="KW-0067">ATP-binding</keyword>
<keyword id="KW-0436">Ligase</keyword>
<keyword id="KW-0460">Magnesium</keyword>
<keyword id="KW-0547">Nucleotide-binding</keyword>
<keyword id="KW-1185">Reference proteome</keyword>
<evidence type="ECO:0000250" key="1">
    <source>
        <dbReference type="UniProtKB" id="O24146"/>
    </source>
</evidence>
<evidence type="ECO:0000250" key="2">
    <source>
        <dbReference type="UniProtKB" id="Q42524"/>
    </source>
</evidence>
<evidence type="ECO:0000305" key="3"/>
<reference key="1">
    <citation type="journal article" date="2002" name="Nature">
        <title>The genome sequence and structure of rice chromosome 1.</title>
        <authorList>
            <person name="Sasaki T."/>
            <person name="Matsumoto T."/>
            <person name="Yamamoto K."/>
            <person name="Sakata K."/>
            <person name="Baba T."/>
            <person name="Katayose Y."/>
            <person name="Wu J."/>
            <person name="Niimura Y."/>
            <person name="Cheng Z."/>
            <person name="Nagamura Y."/>
            <person name="Antonio B.A."/>
            <person name="Kanamori H."/>
            <person name="Hosokawa S."/>
            <person name="Masukawa M."/>
            <person name="Arikawa K."/>
            <person name="Chiden Y."/>
            <person name="Hayashi M."/>
            <person name="Okamoto M."/>
            <person name="Ando T."/>
            <person name="Aoki H."/>
            <person name="Arita K."/>
            <person name="Hamada M."/>
            <person name="Harada C."/>
            <person name="Hijishita S."/>
            <person name="Honda M."/>
            <person name="Ichikawa Y."/>
            <person name="Idonuma A."/>
            <person name="Iijima M."/>
            <person name="Ikeda M."/>
            <person name="Ikeno M."/>
            <person name="Ito S."/>
            <person name="Ito T."/>
            <person name="Ito Y."/>
            <person name="Ito Y."/>
            <person name="Iwabuchi A."/>
            <person name="Kamiya K."/>
            <person name="Karasawa W."/>
            <person name="Katagiri S."/>
            <person name="Kikuta A."/>
            <person name="Kobayashi N."/>
            <person name="Kono I."/>
            <person name="Machita K."/>
            <person name="Maehara T."/>
            <person name="Mizuno H."/>
            <person name="Mizubayashi T."/>
            <person name="Mukai Y."/>
            <person name="Nagasaki H."/>
            <person name="Nakashima M."/>
            <person name="Nakama Y."/>
            <person name="Nakamichi Y."/>
            <person name="Nakamura M."/>
            <person name="Namiki N."/>
            <person name="Negishi M."/>
            <person name="Ohta I."/>
            <person name="Ono N."/>
            <person name="Saji S."/>
            <person name="Sakai K."/>
            <person name="Shibata M."/>
            <person name="Shimokawa T."/>
            <person name="Shomura A."/>
            <person name="Song J."/>
            <person name="Takazaki Y."/>
            <person name="Terasawa K."/>
            <person name="Tsuji K."/>
            <person name="Waki K."/>
            <person name="Yamagata H."/>
            <person name="Yamane H."/>
            <person name="Yoshiki S."/>
            <person name="Yoshihara R."/>
            <person name="Yukawa K."/>
            <person name="Zhong H."/>
            <person name="Iwama H."/>
            <person name="Endo T."/>
            <person name="Ito H."/>
            <person name="Hahn J.H."/>
            <person name="Kim H.-I."/>
            <person name="Eun M.-Y."/>
            <person name="Yano M."/>
            <person name="Jiang J."/>
            <person name="Gojobori T."/>
        </authorList>
    </citation>
    <scope>NUCLEOTIDE SEQUENCE [LARGE SCALE GENOMIC DNA]</scope>
    <source>
        <strain>cv. Nipponbare</strain>
    </source>
</reference>
<reference key="2">
    <citation type="journal article" date="2005" name="Nature">
        <title>The map-based sequence of the rice genome.</title>
        <authorList>
            <consortium name="International rice genome sequencing project (IRGSP)"/>
        </authorList>
    </citation>
    <scope>NUCLEOTIDE SEQUENCE [LARGE SCALE GENOMIC DNA]</scope>
    <source>
        <strain>cv. Nipponbare</strain>
    </source>
</reference>
<reference key="3">
    <citation type="journal article" date="2008" name="Nucleic Acids Res.">
        <title>The rice annotation project database (RAP-DB): 2008 update.</title>
        <authorList>
            <consortium name="The rice annotation project (RAP)"/>
        </authorList>
    </citation>
    <scope>GENOME REANNOTATION</scope>
    <source>
        <strain>cv. Nipponbare</strain>
    </source>
</reference>
<reference key="4">
    <citation type="journal article" date="2013" name="Rice">
        <title>Improvement of the Oryza sativa Nipponbare reference genome using next generation sequence and optical map data.</title>
        <authorList>
            <person name="Kawahara Y."/>
            <person name="de la Bastide M."/>
            <person name="Hamilton J.P."/>
            <person name="Kanamori H."/>
            <person name="McCombie W.R."/>
            <person name="Ouyang S."/>
            <person name="Schwartz D.C."/>
            <person name="Tanaka T."/>
            <person name="Wu J."/>
            <person name="Zhou S."/>
            <person name="Childs K.L."/>
            <person name="Davidson R.M."/>
            <person name="Lin H."/>
            <person name="Quesada-Ocampo L."/>
            <person name="Vaillancourt B."/>
            <person name="Sakai H."/>
            <person name="Lee S.S."/>
            <person name="Kim J."/>
            <person name="Numa H."/>
            <person name="Itoh T."/>
            <person name="Buell C.R."/>
            <person name="Matsumoto T."/>
        </authorList>
    </citation>
    <scope>GENOME REANNOTATION</scope>
    <source>
        <strain>cv. Nipponbare</strain>
    </source>
</reference>
<reference key="5">
    <citation type="journal article" date="2008" name="New Phytol.">
        <title>Genome-wide analysis of a land plant-specific acyl:coenzyme A synthetase (ACS) gene family in Arabidopsis, poplar, rice and Physcomitrella.</title>
        <authorList>
            <person name="de Azevedo Souza C."/>
            <person name="Barbazuk B."/>
            <person name="Ralph S.G."/>
            <person name="Bohlmann J."/>
            <person name="Hamberger B."/>
            <person name="Douglas C.J."/>
        </authorList>
    </citation>
    <scope>GENE FAMILY</scope>
</reference>
<comment type="function">
    <text evidence="1">Carboxylate--CoA ligase that may use 4-coumarate as substrate. Follows a two-step reaction mechanism, wherein the carboxylate substrate first undergoes adenylation by ATP, followed by a thioesterification in the presence of CoA to yield the final CoA thioester.</text>
</comment>
<comment type="catalytic activity">
    <reaction evidence="1">
        <text>(E)-4-coumarate + ATP + CoA = (E)-4-coumaroyl-CoA + AMP + diphosphate</text>
        <dbReference type="Rhea" id="RHEA:19641"/>
        <dbReference type="ChEBI" id="CHEBI:12876"/>
        <dbReference type="ChEBI" id="CHEBI:30616"/>
        <dbReference type="ChEBI" id="CHEBI:33019"/>
        <dbReference type="ChEBI" id="CHEBI:57287"/>
        <dbReference type="ChEBI" id="CHEBI:85008"/>
        <dbReference type="ChEBI" id="CHEBI:456215"/>
        <dbReference type="EC" id="6.2.1.12"/>
    </reaction>
    <physiologicalReaction direction="left-to-right" evidence="1">
        <dbReference type="Rhea" id="RHEA:19642"/>
    </physiologicalReaction>
</comment>
<comment type="catalytic activity">
    <reaction evidence="1">
        <text>(E)-4-coumarate + ATP + H(+) = (E)-4-coumaroyl-AMP + diphosphate</text>
        <dbReference type="Rhea" id="RHEA:72419"/>
        <dbReference type="ChEBI" id="CHEBI:12876"/>
        <dbReference type="ChEBI" id="CHEBI:15378"/>
        <dbReference type="ChEBI" id="CHEBI:30616"/>
        <dbReference type="ChEBI" id="CHEBI:33019"/>
        <dbReference type="ChEBI" id="CHEBI:192348"/>
    </reaction>
    <physiologicalReaction direction="left-to-right" evidence="1">
        <dbReference type="Rhea" id="RHEA:72420"/>
    </physiologicalReaction>
</comment>
<comment type="catalytic activity">
    <reaction evidence="1">
        <text>(E)-4-coumaroyl-AMP + CoA = (E)-4-coumaroyl-CoA + AMP + H(+)</text>
        <dbReference type="Rhea" id="RHEA:72423"/>
        <dbReference type="ChEBI" id="CHEBI:15378"/>
        <dbReference type="ChEBI" id="CHEBI:57287"/>
        <dbReference type="ChEBI" id="CHEBI:85008"/>
        <dbReference type="ChEBI" id="CHEBI:192348"/>
        <dbReference type="ChEBI" id="CHEBI:456215"/>
    </reaction>
    <physiologicalReaction direction="left-to-right" evidence="1">
        <dbReference type="Rhea" id="RHEA:72424"/>
    </physiologicalReaction>
</comment>
<comment type="cofactor">
    <cofactor evidence="1">
        <name>Mg(2+)</name>
        <dbReference type="ChEBI" id="CHEBI:18420"/>
    </cofactor>
</comment>
<comment type="domain">
    <text evidence="2">Both substrate-binding domains (SBD1 and SBD2) are involved in the substrate recognition, and are sufficient to confer the substrate specificity.</text>
</comment>
<comment type="similarity">
    <text evidence="3">Belongs to the ATP-dependent AMP-binding enzyme family.</text>
</comment>
<comment type="sequence caution" evidence="3">
    <conflict type="erroneous gene model prediction">
        <sequence resource="EMBL-CDS" id="BAF07025"/>
    </conflict>
</comment>
<accession>Q7F1X5</accession>
<organism>
    <name type="scientific">Oryza sativa subsp. japonica</name>
    <name type="common">Rice</name>
    <dbReference type="NCBI Taxonomy" id="39947"/>
    <lineage>
        <taxon>Eukaryota</taxon>
        <taxon>Viridiplantae</taxon>
        <taxon>Streptophyta</taxon>
        <taxon>Embryophyta</taxon>
        <taxon>Tracheophyta</taxon>
        <taxon>Spermatophyta</taxon>
        <taxon>Magnoliopsida</taxon>
        <taxon>Liliopsida</taxon>
        <taxon>Poales</taxon>
        <taxon>Poaceae</taxon>
        <taxon>BOP clade</taxon>
        <taxon>Oryzoideae</taxon>
        <taxon>Oryzeae</taxon>
        <taxon>Oryzinae</taxon>
        <taxon>Oryza</taxon>
        <taxon>Oryza sativa</taxon>
    </lineage>
</organism>
<gene>
    <name type="primary">4CLL5</name>
    <name type="ordered locus">Os01g0901500</name>
    <name type="ordered locus">LOC_Os01g67530</name>
    <name type="ORF">B1065G12.9</name>
</gene>
<sequence>MADRAPPPPPPPAGIDSRSGFCAATRIFHSTRAPGDLPPESLPMTAAAYAFSLLSSSTLPGRPALVDAATGIAISYPSFLAAVRSLAGGLWCSLGLRPGDVALVVAPSRLEVPVLDFALMSIGAVVSPANPVSTPEEYAHQVALSRPVVAFAAPEVAAKLPEHVRCVVIGSDEYGRLAASDGRRAAAPAAVAVKQSDTAAVLYSSGTTGRVKAVAITHRNLIALMSLHADNREKVAREAAEAGEEPPPPAVTLLPIPLFHVFGFMMVLRSVSMGETSVLMERFDFIAALRAIERYRVTLLPAAPPVLVAMVKYEEARRRDLSSLLVIGIGGAPLGREVAEQFASVFPNVELVQGYGLTESSGAVAATVGPEESKAYGSVGKLGSHLQAKIVDPSTGYVGDDEATAATVDSEGWLKTGDLCYFNEDGFLYIVDRLKELIKYKGYQVPPAELEHILQSHPGIADAAVIPYPDEEAGELPMAFIVRQPGSNITKEQVMDYVAKQVAPYKKVRRVAFVTAIPKSPAGKILRRELVQQALSMGASKL</sequence>
<dbReference type="EC" id="6.2.1.12" evidence="1"/>
<dbReference type="EMBL" id="AP003791">
    <property type="protein sequence ID" value="BAB90527.1"/>
    <property type="molecule type" value="Genomic_DNA"/>
</dbReference>
<dbReference type="EMBL" id="AP008207">
    <property type="protein sequence ID" value="BAF07025.2"/>
    <property type="status" value="ALT_SEQ"/>
    <property type="molecule type" value="Genomic_DNA"/>
</dbReference>
<dbReference type="EMBL" id="AP014957">
    <property type="status" value="NOT_ANNOTATED_CDS"/>
    <property type="molecule type" value="Genomic_DNA"/>
</dbReference>
<dbReference type="SMR" id="Q7F1X5"/>
<dbReference type="FunCoup" id="Q7F1X5">
    <property type="interactions" value="1321"/>
</dbReference>
<dbReference type="STRING" id="39947.Q7F1X5"/>
<dbReference type="PaxDb" id="39947-Q7F1X5"/>
<dbReference type="KEGG" id="dosa:Os01g0901500"/>
<dbReference type="eggNOG" id="KOG1176">
    <property type="taxonomic scope" value="Eukaryota"/>
</dbReference>
<dbReference type="HOGENOM" id="CLU_000022_59_2_1"/>
<dbReference type="InParanoid" id="Q7F1X5"/>
<dbReference type="PlantReactome" id="R-OSA-1119316">
    <property type="pathway name" value="Phenylpropanoid biosynthesis"/>
</dbReference>
<dbReference type="PlantReactome" id="R-OSA-1119531">
    <property type="pathway name" value="Flavonoid biosynthesis"/>
</dbReference>
<dbReference type="Proteomes" id="UP000000763">
    <property type="component" value="Chromosome 1"/>
</dbReference>
<dbReference type="Proteomes" id="UP000059680">
    <property type="component" value="Chromosome 1"/>
</dbReference>
<dbReference type="GO" id="GO:0016207">
    <property type="term" value="F:4-coumarate-CoA ligase activity"/>
    <property type="evidence" value="ECO:0007669"/>
    <property type="project" value="UniProtKB-ARBA"/>
</dbReference>
<dbReference type="GO" id="GO:0005524">
    <property type="term" value="F:ATP binding"/>
    <property type="evidence" value="ECO:0007669"/>
    <property type="project" value="UniProtKB-KW"/>
</dbReference>
<dbReference type="GO" id="GO:0016405">
    <property type="term" value="F:CoA-ligase activity"/>
    <property type="evidence" value="ECO:0000318"/>
    <property type="project" value="GO_Central"/>
</dbReference>
<dbReference type="GO" id="GO:0106290">
    <property type="term" value="F:trans-cinnamate-CoA ligase activity"/>
    <property type="evidence" value="ECO:0007669"/>
    <property type="project" value="UniProtKB-ARBA"/>
</dbReference>
<dbReference type="GO" id="GO:0009698">
    <property type="term" value="P:phenylpropanoid metabolic process"/>
    <property type="evidence" value="ECO:0007669"/>
    <property type="project" value="UniProtKB-ARBA"/>
</dbReference>
<dbReference type="CDD" id="cd05904">
    <property type="entry name" value="4CL"/>
    <property type="match status" value="1"/>
</dbReference>
<dbReference type="FunFam" id="3.30.300.30:FF:000007">
    <property type="entry name" value="4-coumarate--CoA ligase 2"/>
    <property type="match status" value="1"/>
</dbReference>
<dbReference type="Gene3D" id="3.30.300.30">
    <property type="match status" value="1"/>
</dbReference>
<dbReference type="Gene3D" id="3.40.50.12780">
    <property type="entry name" value="N-terminal domain of ligase-like"/>
    <property type="match status" value="1"/>
</dbReference>
<dbReference type="InterPro" id="IPR025110">
    <property type="entry name" value="AMP-bd_C"/>
</dbReference>
<dbReference type="InterPro" id="IPR045851">
    <property type="entry name" value="AMP-bd_C_sf"/>
</dbReference>
<dbReference type="InterPro" id="IPR020845">
    <property type="entry name" value="AMP-binding_CS"/>
</dbReference>
<dbReference type="InterPro" id="IPR000873">
    <property type="entry name" value="AMP-dep_synth/lig_dom"/>
</dbReference>
<dbReference type="InterPro" id="IPR042099">
    <property type="entry name" value="ANL_N_sf"/>
</dbReference>
<dbReference type="PANTHER" id="PTHR24096:SF251">
    <property type="entry name" value="4-COUMARATE--COA LIGASE-LIKE 9"/>
    <property type="match status" value="1"/>
</dbReference>
<dbReference type="PANTHER" id="PTHR24096">
    <property type="entry name" value="LONG-CHAIN-FATTY-ACID--COA LIGASE"/>
    <property type="match status" value="1"/>
</dbReference>
<dbReference type="Pfam" id="PF00501">
    <property type="entry name" value="AMP-binding"/>
    <property type="match status" value="1"/>
</dbReference>
<dbReference type="Pfam" id="PF13193">
    <property type="entry name" value="AMP-binding_C"/>
    <property type="match status" value="1"/>
</dbReference>
<dbReference type="SUPFAM" id="SSF56801">
    <property type="entry name" value="Acetyl-CoA synthetase-like"/>
    <property type="match status" value="1"/>
</dbReference>
<dbReference type="PROSITE" id="PS00455">
    <property type="entry name" value="AMP_BINDING"/>
    <property type="match status" value="1"/>
</dbReference>
<feature type="chain" id="PRO_0000351631" description="4-coumarate--CoA ligase-like 5">
    <location>
        <begin position="1"/>
        <end position="542"/>
    </location>
</feature>
<feature type="region of interest" description="SBD1">
    <location>
        <begin position="284"/>
        <end position="353"/>
    </location>
</feature>
<feature type="region of interest" description="SBD2">
    <location>
        <begin position="354"/>
        <end position="397"/>
    </location>
</feature>
<feature type="binding site" evidence="1">
    <location>
        <position position="204"/>
    </location>
    <ligand>
        <name>ATP</name>
        <dbReference type="ChEBI" id="CHEBI:30616"/>
    </ligand>
</feature>
<feature type="binding site" evidence="1">
    <location>
        <position position="205"/>
    </location>
    <ligand>
        <name>ATP</name>
        <dbReference type="ChEBI" id="CHEBI:30616"/>
    </ligand>
</feature>
<feature type="binding site" evidence="1">
    <location>
        <position position="206"/>
    </location>
    <ligand>
        <name>ATP</name>
        <dbReference type="ChEBI" id="CHEBI:30616"/>
    </ligand>
</feature>
<feature type="binding site" evidence="1">
    <location>
        <position position="207"/>
    </location>
    <ligand>
        <name>ATP</name>
        <dbReference type="ChEBI" id="CHEBI:30616"/>
    </ligand>
</feature>
<feature type="binding site" evidence="1">
    <location>
        <position position="208"/>
    </location>
    <ligand>
        <name>ATP</name>
        <dbReference type="ChEBI" id="CHEBI:30616"/>
    </ligand>
</feature>
<feature type="binding site" evidence="1">
    <location>
        <position position="212"/>
    </location>
    <ligand>
        <name>ATP</name>
        <dbReference type="ChEBI" id="CHEBI:30616"/>
    </ligand>
</feature>
<feature type="binding site" evidence="1">
    <location>
        <position position="262"/>
    </location>
    <ligand>
        <name>(E)-4-coumaroyl-AMP</name>
        <dbReference type="ChEBI" id="CHEBI:192348"/>
    </ligand>
</feature>
<feature type="binding site" evidence="1">
    <location>
        <position position="282"/>
    </location>
    <ligand>
        <name>CoA</name>
        <dbReference type="ChEBI" id="CHEBI:57287"/>
    </ligand>
</feature>
<feature type="binding site" evidence="1">
    <location>
        <position position="331"/>
    </location>
    <ligand>
        <name>(E)-4-coumaroyl-AMP</name>
        <dbReference type="ChEBI" id="CHEBI:192348"/>
    </ligand>
</feature>
<feature type="binding site" evidence="1">
    <location>
        <position position="353"/>
    </location>
    <ligand>
        <name>(E)-4-coumaroyl-AMP</name>
        <dbReference type="ChEBI" id="CHEBI:192348"/>
    </ligand>
</feature>
<feature type="binding site" evidence="1">
    <location>
        <position position="353"/>
    </location>
    <ligand>
        <name>ATP</name>
        <dbReference type="ChEBI" id="CHEBI:30616"/>
    </ligand>
</feature>
<feature type="binding site" evidence="1">
    <location>
        <position position="354"/>
    </location>
    <ligand>
        <name>(E)-4-coumaroyl-AMP</name>
        <dbReference type="ChEBI" id="CHEBI:192348"/>
    </ligand>
</feature>
<feature type="binding site" evidence="1">
    <location>
        <position position="354"/>
    </location>
    <ligand>
        <name>ATP</name>
        <dbReference type="ChEBI" id="CHEBI:30616"/>
    </ligand>
</feature>
<feature type="binding site" evidence="1">
    <location>
        <position position="358"/>
    </location>
    <ligand>
        <name>(E)-4-coumaroyl-AMP</name>
        <dbReference type="ChEBI" id="CHEBI:192348"/>
    </ligand>
</feature>
<feature type="binding site" evidence="1">
    <location>
        <position position="358"/>
    </location>
    <ligand>
        <name>ATP</name>
        <dbReference type="ChEBI" id="CHEBI:30616"/>
    </ligand>
</feature>
<feature type="binding site" evidence="1">
    <location>
        <position position="418"/>
    </location>
    <ligand>
        <name>ATP</name>
        <dbReference type="ChEBI" id="CHEBI:30616"/>
    </ligand>
</feature>
<feature type="binding site" evidence="1">
    <location>
        <position position="433"/>
    </location>
    <ligand>
        <name>ATP</name>
        <dbReference type="ChEBI" id="CHEBI:30616"/>
    </ligand>
</feature>
<feature type="binding site" evidence="1">
    <location>
        <position position="435"/>
    </location>
    <ligand>
        <name>(E)-4-coumaroyl-AMP</name>
        <dbReference type="ChEBI" id="CHEBI:192348"/>
    </ligand>
</feature>
<feature type="binding site" evidence="1">
    <location>
        <position position="439"/>
    </location>
    <ligand>
        <name>(E)-4-coumaroyl-AMP</name>
        <dbReference type="ChEBI" id="CHEBI:192348"/>
    </ligand>
</feature>
<feature type="binding site" evidence="1">
    <location>
        <position position="441"/>
    </location>
    <ligand>
        <name>CoA</name>
        <dbReference type="ChEBI" id="CHEBI:57287"/>
    </ligand>
</feature>
<feature type="binding site" evidence="1">
    <location>
        <position position="442"/>
    </location>
    <ligand>
        <name>CoA</name>
        <dbReference type="ChEBI" id="CHEBI:57287"/>
    </ligand>
</feature>
<feature type="binding site" evidence="1">
    <location>
        <position position="524"/>
    </location>
    <ligand>
        <name>ATP</name>
        <dbReference type="ChEBI" id="CHEBI:30616"/>
    </ligand>
</feature>